<name>3MGH_XANE5</name>
<dbReference type="EC" id="3.2.2.-" evidence="1"/>
<dbReference type="EMBL" id="AM039952">
    <property type="protein sequence ID" value="CAJ24303.1"/>
    <property type="molecule type" value="Genomic_DNA"/>
</dbReference>
<dbReference type="RefSeq" id="WP_011347770.1">
    <property type="nucleotide sequence ID" value="NZ_CP017190.1"/>
</dbReference>
<dbReference type="SMR" id="Q3BSA6"/>
<dbReference type="STRING" id="456327.BJD11_09750"/>
<dbReference type="KEGG" id="xcv:XCV2626"/>
<dbReference type="eggNOG" id="COG2094">
    <property type="taxonomic scope" value="Bacteria"/>
</dbReference>
<dbReference type="HOGENOM" id="CLU_060471_3_2_6"/>
<dbReference type="Proteomes" id="UP000007069">
    <property type="component" value="Chromosome"/>
</dbReference>
<dbReference type="GO" id="GO:0003905">
    <property type="term" value="F:alkylbase DNA N-glycosylase activity"/>
    <property type="evidence" value="ECO:0007669"/>
    <property type="project" value="InterPro"/>
</dbReference>
<dbReference type="GO" id="GO:0003677">
    <property type="term" value="F:DNA binding"/>
    <property type="evidence" value="ECO:0007669"/>
    <property type="project" value="InterPro"/>
</dbReference>
<dbReference type="GO" id="GO:0006284">
    <property type="term" value="P:base-excision repair"/>
    <property type="evidence" value="ECO:0007669"/>
    <property type="project" value="InterPro"/>
</dbReference>
<dbReference type="CDD" id="cd00540">
    <property type="entry name" value="AAG"/>
    <property type="match status" value="1"/>
</dbReference>
<dbReference type="FunFam" id="3.10.300.10:FF:000001">
    <property type="entry name" value="Putative 3-methyladenine DNA glycosylase"/>
    <property type="match status" value="1"/>
</dbReference>
<dbReference type="Gene3D" id="3.10.300.10">
    <property type="entry name" value="Methylpurine-DNA glycosylase (MPG)"/>
    <property type="match status" value="1"/>
</dbReference>
<dbReference type="HAMAP" id="MF_00527">
    <property type="entry name" value="3MGH"/>
    <property type="match status" value="1"/>
</dbReference>
<dbReference type="InterPro" id="IPR011034">
    <property type="entry name" value="Formyl_transferase-like_C_sf"/>
</dbReference>
<dbReference type="InterPro" id="IPR003180">
    <property type="entry name" value="MPG"/>
</dbReference>
<dbReference type="InterPro" id="IPR036995">
    <property type="entry name" value="MPG_sf"/>
</dbReference>
<dbReference type="NCBIfam" id="TIGR00567">
    <property type="entry name" value="3mg"/>
    <property type="match status" value="1"/>
</dbReference>
<dbReference type="NCBIfam" id="NF002003">
    <property type="entry name" value="PRK00802.1-3"/>
    <property type="match status" value="1"/>
</dbReference>
<dbReference type="PANTHER" id="PTHR10429">
    <property type="entry name" value="DNA-3-METHYLADENINE GLYCOSYLASE"/>
    <property type="match status" value="1"/>
</dbReference>
<dbReference type="PANTHER" id="PTHR10429:SF0">
    <property type="entry name" value="DNA-3-METHYLADENINE GLYCOSYLASE"/>
    <property type="match status" value="1"/>
</dbReference>
<dbReference type="Pfam" id="PF02245">
    <property type="entry name" value="Pur_DNA_glyco"/>
    <property type="match status" value="1"/>
</dbReference>
<dbReference type="SUPFAM" id="SSF50486">
    <property type="entry name" value="FMT C-terminal domain-like"/>
    <property type="match status" value="1"/>
</dbReference>
<keyword id="KW-0227">DNA damage</keyword>
<keyword id="KW-0234">DNA repair</keyword>
<keyword id="KW-0378">Hydrolase</keyword>
<protein>
    <recommendedName>
        <fullName evidence="1">Putative 3-methyladenine DNA glycosylase</fullName>
        <ecNumber evidence="1">3.2.2.-</ecNumber>
    </recommendedName>
</protein>
<accession>Q3BSA6</accession>
<evidence type="ECO:0000255" key="1">
    <source>
        <dbReference type="HAMAP-Rule" id="MF_00527"/>
    </source>
</evidence>
<proteinExistence type="inferred from homology"/>
<reference key="1">
    <citation type="journal article" date="2005" name="J. Bacteriol.">
        <title>Insights into genome plasticity and pathogenicity of the plant pathogenic Bacterium Xanthomonas campestris pv. vesicatoria revealed by the complete genome sequence.</title>
        <authorList>
            <person name="Thieme F."/>
            <person name="Koebnik R."/>
            <person name="Bekel T."/>
            <person name="Berger C."/>
            <person name="Boch J."/>
            <person name="Buettner D."/>
            <person name="Caldana C."/>
            <person name="Gaigalat L."/>
            <person name="Goesmann A."/>
            <person name="Kay S."/>
            <person name="Kirchner O."/>
            <person name="Lanz C."/>
            <person name="Linke B."/>
            <person name="McHardy A.C."/>
            <person name="Meyer F."/>
            <person name="Mittenhuber G."/>
            <person name="Nies D.H."/>
            <person name="Niesbach-Kloesgen U."/>
            <person name="Patschkowski T."/>
            <person name="Rueckert C."/>
            <person name="Rupp O."/>
            <person name="Schneiker S."/>
            <person name="Schuster S.C."/>
            <person name="Vorhoelter F.J."/>
            <person name="Weber E."/>
            <person name="Puehler A."/>
            <person name="Bonas U."/>
            <person name="Bartels D."/>
            <person name="Kaiser O."/>
        </authorList>
    </citation>
    <scope>NUCLEOTIDE SEQUENCE [LARGE SCALE GENOMIC DNA]</scope>
    <source>
        <strain>85-10</strain>
    </source>
</reference>
<comment type="similarity">
    <text evidence="1">Belongs to the DNA glycosylase MPG family.</text>
</comment>
<feature type="chain" id="PRO_0000265072" description="Putative 3-methyladenine DNA glycosylase">
    <location>
        <begin position="1"/>
        <end position="206"/>
    </location>
</feature>
<organism>
    <name type="scientific">Xanthomonas euvesicatoria pv. vesicatoria (strain 85-10)</name>
    <name type="common">Xanthomonas campestris pv. vesicatoria</name>
    <dbReference type="NCBI Taxonomy" id="316273"/>
    <lineage>
        <taxon>Bacteria</taxon>
        <taxon>Pseudomonadati</taxon>
        <taxon>Pseudomonadota</taxon>
        <taxon>Gammaproteobacteria</taxon>
        <taxon>Lysobacterales</taxon>
        <taxon>Lysobacteraceae</taxon>
        <taxon>Xanthomonas</taxon>
    </lineage>
</organism>
<gene>
    <name type="ordered locus">XCV2626</name>
</gene>
<sequence length="206" mass="21888">MPAKPLPRTFYAHDARHVAPQLLNKVLVSADGRRGRITEVEAYCGSDDPAAHSFRGMTPRTRVMFGAPGHLYVYFIYGMHWAINAVCGGAPGHAVLIRALEPLAGIDRMQAARGAAPVTALTTGPGRLAQAFGVTAADNGLDLSTAAARLWIEDDGVPPPSHPVATPRIGIRKAVDAPWRWVVADSRYVSRPLPRVTGKGTAPAGD</sequence>